<sequence length="428" mass="47768">MEILMASSNLIKQLQERGLVAQVTDEDALAERLAQGPIALYCGFDPTADSLHLGHLVPLLCLKRFQQAGHKPVALVGGATGLIGDPSFKAAERKLNTEETVQEWVAKIRKQVAPFLDFDCGENSAIAANNYDWFGSMNVLTFLRDIGKHFSVNQMINKEAVKQRLNRDDQGISFTEFSYNLLQGYDFACLNKLHGVALQIGGSDQWGNITSGIDLTRRLHQNQVFGLTVPLITKADGTKFGKTEGGAVWLDPKKTSPYKFYQFWINTADADVYRFLKFFTFMDIEEINALEEEDKNSGKAPRAQYVLAEQVTRLVHGEEGLVAAKRITECLFSGSLSALSEADFEQLAQDGVPMVEMEKGADLMQALVDAELQPSRGQARKTIASNAVTINGEKQSDPEYIFNDEDRLFGRYTLLRRGKKNYCLICWK</sequence>
<organism>
    <name type="scientific">Salmonella paratyphi C (strain RKS4594)</name>
    <dbReference type="NCBI Taxonomy" id="476213"/>
    <lineage>
        <taxon>Bacteria</taxon>
        <taxon>Pseudomonadati</taxon>
        <taxon>Pseudomonadota</taxon>
        <taxon>Gammaproteobacteria</taxon>
        <taxon>Enterobacterales</taxon>
        <taxon>Enterobacteriaceae</taxon>
        <taxon>Salmonella</taxon>
    </lineage>
</organism>
<protein>
    <recommendedName>
        <fullName evidence="1">Tyrosine--tRNA ligase</fullName>
        <ecNumber evidence="1">6.1.1.1</ecNumber>
    </recommendedName>
    <alternativeName>
        <fullName evidence="1">Tyrosyl-tRNA synthetase</fullName>
        <shortName evidence="1">TyrRS</shortName>
    </alternativeName>
</protein>
<reference key="1">
    <citation type="journal article" date="2009" name="PLoS ONE">
        <title>Salmonella paratyphi C: genetic divergence from Salmonella choleraesuis and pathogenic convergence with Salmonella typhi.</title>
        <authorList>
            <person name="Liu W.-Q."/>
            <person name="Feng Y."/>
            <person name="Wang Y."/>
            <person name="Zou Q.-H."/>
            <person name="Chen F."/>
            <person name="Guo J.-T."/>
            <person name="Peng Y.-H."/>
            <person name="Jin Y."/>
            <person name="Li Y.-G."/>
            <person name="Hu S.-N."/>
            <person name="Johnston R.N."/>
            <person name="Liu G.-R."/>
            <person name="Liu S.-L."/>
        </authorList>
    </citation>
    <scope>NUCLEOTIDE SEQUENCE [LARGE SCALE GENOMIC DNA]</scope>
    <source>
        <strain>RKS4594</strain>
    </source>
</reference>
<accession>C0Q5T3</accession>
<proteinExistence type="inferred from homology"/>
<dbReference type="EC" id="6.1.1.1" evidence="1"/>
<dbReference type="EMBL" id="CP000857">
    <property type="protein sequence ID" value="ACN46399.1"/>
    <property type="molecule type" value="Genomic_DNA"/>
</dbReference>
<dbReference type="SMR" id="C0Q5T3"/>
<dbReference type="KEGG" id="sei:SPC_2282"/>
<dbReference type="HOGENOM" id="CLU_024003_0_3_6"/>
<dbReference type="Proteomes" id="UP000001599">
    <property type="component" value="Chromosome"/>
</dbReference>
<dbReference type="GO" id="GO:0005829">
    <property type="term" value="C:cytosol"/>
    <property type="evidence" value="ECO:0007669"/>
    <property type="project" value="TreeGrafter"/>
</dbReference>
<dbReference type="GO" id="GO:0005524">
    <property type="term" value="F:ATP binding"/>
    <property type="evidence" value="ECO:0007669"/>
    <property type="project" value="UniProtKB-UniRule"/>
</dbReference>
<dbReference type="GO" id="GO:0003723">
    <property type="term" value="F:RNA binding"/>
    <property type="evidence" value="ECO:0007669"/>
    <property type="project" value="UniProtKB-KW"/>
</dbReference>
<dbReference type="GO" id="GO:0004831">
    <property type="term" value="F:tyrosine-tRNA ligase activity"/>
    <property type="evidence" value="ECO:0007669"/>
    <property type="project" value="UniProtKB-UniRule"/>
</dbReference>
<dbReference type="GO" id="GO:0006437">
    <property type="term" value="P:tyrosyl-tRNA aminoacylation"/>
    <property type="evidence" value="ECO:0007669"/>
    <property type="project" value="UniProtKB-UniRule"/>
</dbReference>
<dbReference type="CDD" id="cd00165">
    <property type="entry name" value="S4"/>
    <property type="match status" value="1"/>
</dbReference>
<dbReference type="CDD" id="cd00805">
    <property type="entry name" value="TyrRS_core"/>
    <property type="match status" value="1"/>
</dbReference>
<dbReference type="FunFam" id="1.10.240.10:FF:000001">
    <property type="entry name" value="Tyrosine--tRNA ligase"/>
    <property type="match status" value="1"/>
</dbReference>
<dbReference type="FunFam" id="3.10.290.10:FF:000007">
    <property type="entry name" value="Tyrosine--tRNA ligase"/>
    <property type="match status" value="1"/>
</dbReference>
<dbReference type="FunFam" id="3.40.50.620:FF:000008">
    <property type="entry name" value="Tyrosine--tRNA ligase"/>
    <property type="match status" value="1"/>
</dbReference>
<dbReference type="Gene3D" id="3.40.50.620">
    <property type="entry name" value="HUPs"/>
    <property type="match status" value="1"/>
</dbReference>
<dbReference type="Gene3D" id="3.10.290.10">
    <property type="entry name" value="RNA-binding S4 domain"/>
    <property type="match status" value="1"/>
</dbReference>
<dbReference type="Gene3D" id="1.10.240.10">
    <property type="entry name" value="Tyrosyl-Transfer RNA Synthetase"/>
    <property type="match status" value="1"/>
</dbReference>
<dbReference type="HAMAP" id="MF_02006">
    <property type="entry name" value="Tyr_tRNA_synth_type1"/>
    <property type="match status" value="1"/>
</dbReference>
<dbReference type="InterPro" id="IPR001412">
    <property type="entry name" value="aa-tRNA-synth_I_CS"/>
</dbReference>
<dbReference type="InterPro" id="IPR002305">
    <property type="entry name" value="aa-tRNA-synth_Ic"/>
</dbReference>
<dbReference type="InterPro" id="IPR014729">
    <property type="entry name" value="Rossmann-like_a/b/a_fold"/>
</dbReference>
<dbReference type="InterPro" id="IPR002942">
    <property type="entry name" value="S4_RNA-bd"/>
</dbReference>
<dbReference type="InterPro" id="IPR036986">
    <property type="entry name" value="S4_RNA-bd_sf"/>
</dbReference>
<dbReference type="InterPro" id="IPR054608">
    <property type="entry name" value="SYY-like_C"/>
</dbReference>
<dbReference type="InterPro" id="IPR002307">
    <property type="entry name" value="Tyr-tRNA-ligase"/>
</dbReference>
<dbReference type="InterPro" id="IPR024088">
    <property type="entry name" value="Tyr-tRNA-ligase_bac-type"/>
</dbReference>
<dbReference type="InterPro" id="IPR024107">
    <property type="entry name" value="Tyr-tRNA-ligase_bac_1"/>
</dbReference>
<dbReference type="NCBIfam" id="TIGR00234">
    <property type="entry name" value="tyrS"/>
    <property type="match status" value="1"/>
</dbReference>
<dbReference type="PANTHER" id="PTHR11766:SF0">
    <property type="entry name" value="TYROSINE--TRNA LIGASE, MITOCHONDRIAL"/>
    <property type="match status" value="1"/>
</dbReference>
<dbReference type="PANTHER" id="PTHR11766">
    <property type="entry name" value="TYROSYL-TRNA SYNTHETASE"/>
    <property type="match status" value="1"/>
</dbReference>
<dbReference type="Pfam" id="PF22421">
    <property type="entry name" value="SYY_C-terminal"/>
    <property type="match status" value="1"/>
</dbReference>
<dbReference type="Pfam" id="PF00579">
    <property type="entry name" value="tRNA-synt_1b"/>
    <property type="match status" value="1"/>
</dbReference>
<dbReference type="PRINTS" id="PR01040">
    <property type="entry name" value="TRNASYNTHTYR"/>
</dbReference>
<dbReference type="SMART" id="SM00363">
    <property type="entry name" value="S4"/>
    <property type="match status" value="1"/>
</dbReference>
<dbReference type="SUPFAM" id="SSF55174">
    <property type="entry name" value="Alpha-L RNA-binding motif"/>
    <property type="match status" value="1"/>
</dbReference>
<dbReference type="SUPFAM" id="SSF52374">
    <property type="entry name" value="Nucleotidylyl transferase"/>
    <property type="match status" value="1"/>
</dbReference>
<dbReference type="PROSITE" id="PS00178">
    <property type="entry name" value="AA_TRNA_LIGASE_I"/>
    <property type="match status" value="1"/>
</dbReference>
<dbReference type="PROSITE" id="PS50889">
    <property type="entry name" value="S4"/>
    <property type="match status" value="1"/>
</dbReference>
<evidence type="ECO:0000255" key="1">
    <source>
        <dbReference type="HAMAP-Rule" id="MF_02006"/>
    </source>
</evidence>
<keyword id="KW-0030">Aminoacyl-tRNA synthetase</keyword>
<keyword id="KW-0067">ATP-binding</keyword>
<keyword id="KW-0963">Cytoplasm</keyword>
<keyword id="KW-0436">Ligase</keyword>
<keyword id="KW-0547">Nucleotide-binding</keyword>
<keyword id="KW-0648">Protein biosynthesis</keyword>
<keyword id="KW-0694">RNA-binding</keyword>
<comment type="function">
    <text evidence="1">Catalyzes the attachment of tyrosine to tRNA(Tyr) in a two-step reaction: tyrosine is first activated by ATP to form Tyr-AMP and then transferred to the acceptor end of tRNA(Tyr).</text>
</comment>
<comment type="catalytic activity">
    <reaction evidence="1">
        <text>tRNA(Tyr) + L-tyrosine + ATP = L-tyrosyl-tRNA(Tyr) + AMP + diphosphate + H(+)</text>
        <dbReference type="Rhea" id="RHEA:10220"/>
        <dbReference type="Rhea" id="RHEA-COMP:9706"/>
        <dbReference type="Rhea" id="RHEA-COMP:9707"/>
        <dbReference type="ChEBI" id="CHEBI:15378"/>
        <dbReference type="ChEBI" id="CHEBI:30616"/>
        <dbReference type="ChEBI" id="CHEBI:33019"/>
        <dbReference type="ChEBI" id="CHEBI:58315"/>
        <dbReference type="ChEBI" id="CHEBI:78442"/>
        <dbReference type="ChEBI" id="CHEBI:78536"/>
        <dbReference type="ChEBI" id="CHEBI:456215"/>
        <dbReference type="EC" id="6.1.1.1"/>
    </reaction>
</comment>
<comment type="subunit">
    <text evidence="1">Homodimer.</text>
</comment>
<comment type="subcellular location">
    <subcellularLocation>
        <location evidence="1">Cytoplasm</location>
    </subcellularLocation>
</comment>
<comment type="similarity">
    <text evidence="1">Belongs to the class-I aminoacyl-tRNA synthetase family. TyrS type 1 subfamily.</text>
</comment>
<gene>
    <name evidence="1" type="primary">tyrS</name>
    <name type="ordered locus">SPC_2282</name>
</gene>
<name>SYY_SALPC</name>
<feature type="chain" id="PRO_1000189327" description="Tyrosine--tRNA ligase">
    <location>
        <begin position="1"/>
        <end position="428"/>
    </location>
</feature>
<feature type="domain" description="S4 RNA-binding" evidence="1">
    <location>
        <begin position="361"/>
        <end position="418"/>
    </location>
</feature>
<feature type="short sequence motif" description="'HIGH' region">
    <location>
        <begin position="46"/>
        <end position="55"/>
    </location>
</feature>
<feature type="short sequence motif" description="'KMSKS' region">
    <location>
        <begin position="239"/>
        <end position="243"/>
    </location>
</feature>
<feature type="binding site" evidence="1">
    <location>
        <position position="41"/>
    </location>
    <ligand>
        <name>L-tyrosine</name>
        <dbReference type="ChEBI" id="CHEBI:58315"/>
    </ligand>
</feature>
<feature type="binding site" evidence="1">
    <location>
        <position position="179"/>
    </location>
    <ligand>
        <name>L-tyrosine</name>
        <dbReference type="ChEBI" id="CHEBI:58315"/>
    </ligand>
</feature>
<feature type="binding site" evidence="1">
    <location>
        <position position="183"/>
    </location>
    <ligand>
        <name>L-tyrosine</name>
        <dbReference type="ChEBI" id="CHEBI:58315"/>
    </ligand>
</feature>
<feature type="binding site" evidence="1">
    <location>
        <position position="242"/>
    </location>
    <ligand>
        <name>ATP</name>
        <dbReference type="ChEBI" id="CHEBI:30616"/>
    </ligand>
</feature>